<accession>A6H7J2</accession>
<dbReference type="EMBL" id="BC146267">
    <property type="protein sequence ID" value="AAI46268.1"/>
    <property type="molecule type" value="mRNA"/>
</dbReference>
<dbReference type="RefSeq" id="NP_001092386.1">
    <property type="nucleotide sequence ID" value="NM_001098916.2"/>
</dbReference>
<dbReference type="SMR" id="A6H7J2"/>
<dbReference type="FunCoup" id="A6H7J2">
    <property type="interactions" value="1389"/>
</dbReference>
<dbReference type="STRING" id="9913.ENSBTAP00000023214"/>
<dbReference type="PaxDb" id="9913-ENSBTAP00000023214"/>
<dbReference type="Ensembl" id="ENSBTAT00000023214.4">
    <property type="protein sequence ID" value="ENSBTAP00000023214.3"/>
    <property type="gene ID" value="ENSBTAG00000017463.5"/>
</dbReference>
<dbReference type="GeneID" id="509108"/>
<dbReference type="KEGG" id="bta:509108"/>
<dbReference type="CTD" id="91582"/>
<dbReference type="VEuPathDB" id="HostDB:ENSBTAG00000017463"/>
<dbReference type="VGNC" id="VGNC:34132">
    <property type="gene designation" value="RPS19BP1"/>
</dbReference>
<dbReference type="eggNOG" id="ENOG502S1CM">
    <property type="taxonomic scope" value="Eukaryota"/>
</dbReference>
<dbReference type="GeneTree" id="ENSGT00390000016774"/>
<dbReference type="HOGENOM" id="CLU_152637_0_0_1"/>
<dbReference type="InParanoid" id="A6H7J2"/>
<dbReference type="OMA" id="KFQREYF"/>
<dbReference type="OrthoDB" id="6493910at2759"/>
<dbReference type="TreeFam" id="TF333429"/>
<dbReference type="Reactome" id="R-BTA-3371453">
    <property type="pathway name" value="Regulation of HSF1-mediated heat shock response"/>
</dbReference>
<dbReference type="Proteomes" id="UP000009136">
    <property type="component" value="Chromosome 5"/>
</dbReference>
<dbReference type="Bgee" id="ENSBTAG00000017463">
    <property type="expression patterns" value="Expressed in ileocecal valve and 107 other cell types or tissues"/>
</dbReference>
<dbReference type="GO" id="GO:0005829">
    <property type="term" value="C:cytosol"/>
    <property type="evidence" value="ECO:0007669"/>
    <property type="project" value="Ensembl"/>
</dbReference>
<dbReference type="GO" id="GO:0005730">
    <property type="term" value="C:nucleolus"/>
    <property type="evidence" value="ECO:0000318"/>
    <property type="project" value="GO_Central"/>
</dbReference>
<dbReference type="GO" id="GO:0005654">
    <property type="term" value="C:nucleoplasm"/>
    <property type="evidence" value="ECO:0007669"/>
    <property type="project" value="Ensembl"/>
</dbReference>
<dbReference type="GO" id="GO:0032040">
    <property type="term" value="C:small-subunit processome"/>
    <property type="evidence" value="ECO:0000250"/>
    <property type="project" value="UniProtKB"/>
</dbReference>
<dbReference type="GO" id="GO:0019899">
    <property type="term" value="F:enzyme binding"/>
    <property type="evidence" value="ECO:0000318"/>
    <property type="project" value="GO_Central"/>
</dbReference>
<dbReference type="GO" id="GO:0042274">
    <property type="term" value="P:ribosomal small subunit biogenesis"/>
    <property type="evidence" value="ECO:0000250"/>
    <property type="project" value="UniProtKB"/>
</dbReference>
<dbReference type="InterPro" id="IPR023262">
    <property type="entry name" value="AROS"/>
</dbReference>
<dbReference type="PANTHER" id="PTHR31454">
    <property type="entry name" value="ACTIVE REGULATOR OF SIRT1"/>
    <property type="match status" value="1"/>
</dbReference>
<dbReference type="PANTHER" id="PTHR31454:SF2">
    <property type="entry name" value="ACTIVE REGULATOR OF SIRT1"/>
    <property type="match status" value="1"/>
</dbReference>
<dbReference type="Pfam" id="PF15684">
    <property type="entry name" value="AROS"/>
    <property type="match status" value="1"/>
</dbReference>
<dbReference type="PRINTS" id="PR02029">
    <property type="entry name" value="ACTREGSIRT1"/>
</dbReference>
<feature type="chain" id="PRO_0000361537" description="Active regulator of SIRT1">
    <location>
        <begin position="1"/>
        <end position="137"/>
    </location>
</feature>
<feature type="region of interest" description="Disordered" evidence="3">
    <location>
        <begin position="14"/>
        <end position="58"/>
    </location>
</feature>
<feature type="region of interest" description="Disordered" evidence="3">
    <location>
        <begin position="96"/>
        <end position="120"/>
    </location>
</feature>
<feature type="compositionally biased region" description="Low complexity" evidence="3">
    <location>
        <begin position="14"/>
        <end position="24"/>
    </location>
</feature>
<feature type="modified residue" description="Citrulline" evidence="1">
    <location>
        <position position="7"/>
    </location>
</feature>
<feature type="modified residue" description="Phosphoserine" evidence="2">
    <location>
        <position position="84"/>
    </location>
</feature>
<comment type="function">
    <text evidence="2">Part of the small subunit (SSU) processome, first precursor of the small eukaryotic ribosomal subunit. During the assembly of the SSU processome in the nucleolus, many ribosome biogenesis factors, an RNA chaperone and ribosomal proteins associate with the nascent pre-rRNA and work in concert to generate RNA folding, modifications, rearrangements and cleavage as well as targeted degradation of pre-ribosomal RNA by the RNA exosome. Acts as a chaperone that specifically mediates the integration of RPS19 in state post-A1. Direct regulator of SIRT1. Enhances SIRT1-mediated deacetylation of p53/TP53, thereby participating in inhibition of p53/TP53-mediated transcriptional activity.</text>
</comment>
<comment type="subunit">
    <text evidence="2">Part of the small subunit (SSU) processome, composed of more than 70 proteins and the RNA chaperone small nucleolar RNA (snoRNA) U3. Interacts with RPS19; the interaction is direct and mediates the integration of RPS19 in state post-A1. Interacts with SIRT1.</text>
</comment>
<comment type="subcellular location">
    <subcellularLocation>
        <location evidence="2">Nucleus</location>
        <location evidence="2">Nucleolus</location>
    </subcellularLocation>
</comment>
<comment type="PTM">
    <text evidence="1">Citrullinated by PADI4.</text>
</comment>
<comment type="similarity">
    <text evidence="4">Belongs to the AROS family.</text>
</comment>
<gene>
    <name type="primary">RPS19BP1</name>
    <name type="synonym">AROS</name>
</gene>
<organism>
    <name type="scientific">Bos taurus</name>
    <name type="common">Bovine</name>
    <dbReference type="NCBI Taxonomy" id="9913"/>
    <lineage>
        <taxon>Eukaryota</taxon>
        <taxon>Metazoa</taxon>
        <taxon>Chordata</taxon>
        <taxon>Craniata</taxon>
        <taxon>Vertebrata</taxon>
        <taxon>Euteleostomi</taxon>
        <taxon>Mammalia</taxon>
        <taxon>Eutheria</taxon>
        <taxon>Laurasiatheria</taxon>
        <taxon>Artiodactyla</taxon>
        <taxon>Ruminantia</taxon>
        <taxon>Pecora</taxon>
        <taxon>Bovidae</taxon>
        <taxon>Bovinae</taxon>
        <taxon>Bos</taxon>
    </lineage>
</organism>
<protein>
    <recommendedName>
        <fullName>Active regulator of SIRT1</fullName>
    </recommendedName>
    <alternativeName>
        <fullName>40S ribosomal protein S19-binding protein 1</fullName>
        <shortName>RPS19-binding protein 1</shortName>
        <shortName>S19BP</shortName>
    </alternativeName>
</protein>
<evidence type="ECO:0000250" key="1"/>
<evidence type="ECO:0000250" key="2">
    <source>
        <dbReference type="UniProtKB" id="Q86WX3"/>
    </source>
</evidence>
<evidence type="ECO:0000256" key="3">
    <source>
        <dbReference type="SAM" id="MobiDB-lite"/>
    </source>
</evidence>
<evidence type="ECO:0000305" key="4"/>
<name>AROS_BOVIN</name>
<sequence>MSAALLRRGLELLGAPEAPGAAPGHTKPSQAPMKRTRKAKATQAQKLRNSAKGKVPKSALAEFRKKERRGYLGVNLRFMTSARSTVDESVTRQIMRQNRGRKACDRPVTKTKKKKKAEGTVFTEEDFQKFQREYFGS</sequence>
<keyword id="KW-0164">Citrullination</keyword>
<keyword id="KW-0539">Nucleus</keyword>
<keyword id="KW-0597">Phosphoprotein</keyword>
<keyword id="KW-1185">Reference proteome</keyword>
<reference key="1">
    <citation type="submission" date="2007-06" db="EMBL/GenBank/DDBJ databases">
        <authorList>
            <consortium name="NIH - Mammalian Gene Collection (MGC) project"/>
        </authorList>
    </citation>
    <scope>NUCLEOTIDE SEQUENCE [LARGE SCALE MRNA]</scope>
    <source>
        <strain>Hereford</strain>
        <tissue>Fetal cerebellum</tissue>
    </source>
</reference>
<proteinExistence type="evidence at transcript level"/>